<keyword id="KW-0012">Acyltransferase</keyword>
<keyword id="KW-0963">Cytoplasm</keyword>
<keyword id="KW-0275">Fatty acid biosynthesis</keyword>
<keyword id="KW-0276">Fatty acid metabolism</keyword>
<keyword id="KW-0444">Lipid biosynthesis</keyword>
<keyword id="KW-0443">Lipid metabolism</keyword>
<keyword id="KW-0511">Multifunctional enzyme</keyword>
<keyword id="KW-1185">Reference proteome</keyword>
<keyword id="KW-0808">Transferase</keyword>
<gene>
    <name evidence="1" type="primary">fabH</name>
    <name type="ordered locus">Pden_1861</name>
</gene>
<protein>
    <recommendedName>
        <fullName evidence="1">Beta-ketoacyl-[acyl-carrier-protein] synthase III</fullName>
        <shortName evidence="1">Beta-ketoacyl-ACP synthase III</shortName>
        <shortName evidence="1">KAS III</shortName>
        <ecNumber evidence="1">2.3.1.180</ecNumber>
    </recommendedName>
    <alternativeName>
        <fullName evidence="1">3-oxoacyl-[acyl-carrier-protein] synthase 3</fullName>
    </alternativeName>
    <alternativeName>
        <fullName evidence="1">3-oxoacyl-[acyl-carrier-protein] synthase III</fullName>
    </alternativeName>
</protein>
<proteinExistence type="inferred from homology"/>
<sequence>MRRAIVRGTGHYLPERVVENSWFEDKLDTSDEWIRARTGIERRHFAAEDQRTSDLGILAAQAALADAGLEAAQIDAVIVATSTPDLTFPSVATMVQAGLGMRHGFAYDLQAVCAGFVYALANADALIRAGLADRVLLIGAETFSRIMDWTDRGTCVLFGDGAGAVVLEAAEGQGSSADRGILATDLNSDGQYRDLLYVDGGVASTGTAGHLRMQGNLVFRHAVEKLADTAHRALDRAGLTPDQVDWLVPHQANLRIIEATAKRMHLPMEKVVLTVADHGNTSAASIPLALSVANAEGRFKPGDLLVAEAIGGGLAWGSVVLRW</sequence>
<evidence type="ECO:0000255" key="1">
    <source>
        <dbReference type="HAMAP-Rule" id="MF_01815"/>
    </source>
</evidence>
<dbReference type="EC" id="2.3.1.180" evidence="1"/>
<dbReference type="EMBL" id="CP000489">
    <property type="protein sequence ID" value="ABL69958.1"/>
    <property type="molecule type" value="Genomic_DNA"/>
</dbReference>
<dbReference type="RefSeq" id="WP_011748155.1">
    <property type="nucleotide sequence ID" value="NC_008686.1"/>
</dbReference>
<dbReference type="SMR" id="A1B364"/>
<dbReference type="STRING" id="318586.Pden_1861"/>
<dbReference type="EnsemblBacteria" id="ABL69958">
    <property type="protein sequence ID" value="ABL69958"/>
    <property type="gene ID" value="Pden_1861"/>
</dbReference>
<dbReference type="GeneID" id="93450257"/>
<dbReference type="KEGG" id="pde:Pden_1861"/>
<dbReference type="eggNOG" id="COG0332">
    <property type="taxonomic scope" value="Bacteria"/>
</dbReference>
<dbReference type="HOGENOM" id="CLU_039592_3_1_5"/>
<dbReference type="OrthoDB" id="9815506at2"/>
<dbReference type="UniPathway" id="UPA00094"/>
<dbReference type="Proteomes" id="UP000000361">
    <property type="component" value="Chromosome 1"/>
</dbReference>
<dbReference type="GO" id="GO:0005737">
    <property type="term" value="C:cytoplasm"/>
    <property type="evidence" value="ECO:0007669"/>
    <property type="project" value="UniProtKB-SubCell"/>
</dbReference>
<dbReference type="GO" id="GO:0004315">
    <property type="term" value="F:3-oxoacyl-[acyl-carrier-protein] synthase activity"/>
    <property type="evidence" value="ECO:0007669"/>
    <property type="project" value="InterPro"/>
</dbReference>
<dbReference type="GO" id="GO:0033818">
    <property type="term" value="F:beta-ketoacyl-acyl-carrier-protein synthase III activity"/>
    <property type="evidence" value="ECO:0007669"/>
    <property type="project" value="UniProtKB-UniRule"/>
</dbReference>
<dbReference type="GO" id="GO:0006633">
    <property type="term" value="P:fatty acid biosynthetic process"/>
    <property type="evidence" value="ECO:0007669"/>
    <property type="project" value="UniProtKB-UniRule"/>
</dbReference>
<dbReference type="GO" id="GO:0044550">
    <property type="term" value="P:secondary metabolite biosynthetic process"/>
    <property type="evidence" value="ECO:0007669"/>
    <property type="project" value="TreeGrafter"/>
</dbReference>
<dbReference type="CDD" id="cd00830">
    <property type="entry name" value="KAS_III"/>
    <property type="match status" value="1"/>
</dbReference>
<dbReference type="FunFam" id="3.40.47.10:FF:000004">
    <property type="entry name" value="3-oxoacyl-[acyl-carrier-protein] synthase 3"/>
    <property type="match status" value="1"/>
</dbReference>
<dbReference type="Gene3D" id="3.40.47.10">
    <property type="match status" value="1"/>
</dbReference>
<dbReference type="HAMAP" id="MF_01815">
    <property type="entry name" value="FabH"/>
    <property type="match status" value="1"/>
</dbReference>
<dbReference type="InterPro" id="IPR013747">
    <property type="entry name" value="ACP_syn_III_C"/>
</dbReference>
<dbReference type="InterPro" id="IPR013751">
    <property type="entry name" value="ACP_syn_III_N"/>
</dbReference>
<dbReference type="InterPro" id="IPR004655">
    <property type="entry name" value="FabH"/>
</dbReference>
<dbReference type="InterPro" id="IPR016039">
    <property type="entry name" value="Thiolase-like"/>
</dbReference>
<dbReference type="NCBIfam" id="TIGR00747">
    <property type="entry name" value="fabH"/>
    <property type="match status" value="1"/>
</dbReference>
<dbReference type="NCBIfam" id="NF006829">
    <property type="entry name" value="PRK09352.1"/>
    <property type="match status" value="1"/>
</dbReference>
<dbReference type="PANTHER" id="PTHR34069">
    <property type="entry name" value="3-OXOACYL-[ACYL-CARRIER-PROTEIN] SYNTHASE 3"/>
    <property type="match status" value="1"/>
</dbReference>
<dbReference type="PANTHER" id="PTHR34069:SF2">
    <property type="entry name" value="BETA-KETOACYL-[ACYL-CARRIER-PROTEIN] SYNTHASE III"/>
    <property type="match status" value="1"/>
</dbReference>
<dbReference type="Pfam" id="PF08545">
    <property type="entry name" value="ACP_syn_III"/>
    <property type="match status" value="1"/>
</dbReference>
<dbReference type="Pfam" id="PF08541">
    <property type="entry name" value="ACP_syn_III_C"/>
    <property type="match status" value="1"/>
</dbReference>
<dbReference type="SUPFAM" id="SSF53901">
    <property type="entry name" value="Thiolase-like"/>
    <property type="match status" value="1"/>
</dbReference>
<feature type="chain" id="PRO_1000070235" description="Beta-ketoacyl-[acyl-carrier-protein] synthase III">
    <location>
        <begin position="1"/>
        <end position="323"/>
    </location>
</feature>
<feature type="region of interest" description="ACP-binding" evidence="1">
    <location>
        <begin position="251"/>
        <end position="255"/>
    </location>
</feature>
<feature type="active site" evidence="1">
    <location>
        <position position="113"/>
    </location>
</feature>
<feature type="active site" evidence="1">
    <location>
        <position position="250"/>
    </location>
</feature>
<feature type="active site" evidence="1">
    <location>
        <position position="280"/>
    </location>
</feature>
<accession>A1B364</accession>
<name>FABH_PARDP</name>
<reference key="1">
    <citation type="submission" date="2006-12" db="EMBL/GenBank/DDBJ databases">
        <title>Complete sequence of chromosome 1 of Paracoccus denitrificans PD1222.</title>
        <authorList>
            <person name="Copeland A."/>
            <person name="Lucas S."/>
            <person name="Lapidus A."/>
            <person name="Barry K."/>
            <person name="Detter J.C."/>
            <person name="Glavina del Rio T."/>
            <person name="Hammon N."/>
            <person name="Israni S."/>
            <person name="Dalin E."/>
            <person name="Tice H."/>
            <person name="Pitluck S."/>
            <person name="Munk A.C."/>
            <person name="Brettin T."/>
            <person name="Bruce D."/>
            <person name="Han C."/>
            <person name="Tapia R."/>
            <person name="Gilna P."/>
            <person name="Schmutz J."/>
            <person name="Larimer F."/>
            <person name="Land M."/>
            <person name="Hauser L."/>
            <person name="Kyrpides N."/>
            <person name="Lykidis A."/>
            <person name="Spiro S."/>
            <person name="Richardson D.J."/>
            <person name="Moir J.W.B."/>
            <person name="Ferguson S.J."/>
            <person name="van Spanning R.J.M."/>
            <person name="Richardson P."/>
        </authorList>
    </citation>
    <scope>NUCLEOTIDE SEQUENCE [LARGE SCALE GENOMIC DNA]</scope>
    <source>
        <strain>Pd 1222</strain>
    </source>
</reference>
<comment type="function">
    <text evidence="1">Catalyzes the condensation reaction of fatty acid synthesis by the addition to an acyl acceptor of two carbons from malonyl-ACP. Catalyzes the first condensation reaction which initiates fatty acid synthesis and may therefore play a role in governing the total rate of fatty acid production. Possesses both acetoacetyl-ACP synthase and acetyl transacylase activities. Its substrate specificity determines the biosynthesis of branched-chain and/or straight-chain of fatty acids.</text>
</comment>
<comment type="catalytic activity">
    <reaction evidence="1">
        <text>malonyl-[ACP] + acetyl-CoA + H(+) = 3-oxobutanoyl-[ACP] + CO2 + CoA</text>
        <dbReference type="Rhea" id="RHEA:12080"/>
        <dbReference type="Rhea" id="RHEA-COMP:9623"/>
        <dbReference type="Rhea" id="RHEA-COMP:9625"/>
        <dbReference type="ChEBI" id="CHEBI:15378"/>
        <dbReference type="ChEBI" id="CHEBI:16526"/>
        <dbReference type="ChEBI" id="CHEBI:57287"/>
        <dbReference type="ChEBI" id="CHEBI:57288"/>
        <dbReference type="ChEBI" id="CHEBI:78449"/>
        <dbReference type="ChEBI" id="CHEBI:78450"/>
        <dbReference type="EC" id="2.3.1.180"/>
    </reaction>
</comment>
<comment type="pathway">
    <text evidence="1">Lipid metabolism; fatty acid biosynthesis.</text>
</comment>
<comment type="subunit">
    <text evidence="1">Homodimer.</text>
</comment>
<comment type="subcellular location">
    <subcellularLocation>
        <location evidence="1">Cytoplasm</location>
    </subcellularLocation>
</comment>
<comment type="domain">
    <text evidence="1">The last Arg residue of the ACP-binding site is essential for the weak association between ACP/AcpP and FabH.</text>
</comment>
<comment type="similarity">
    <text evidence="1">Belongs to the thiolase-like superfamily. FabH family.</text>
</comment>
<organism>
    <name type="scientific">Paracoccus denitrificans (strain Pd 1222)</name>
    <dbReference type="NCBI Taxonomy" id="318586"/>
    <lineage>
        <taxon>Bacteria</taxon>
        <taxon>Pseudomonadati</taxon>
        <taxon>Pseudomonadota</taxon>
        <taxon>Alphaproteobacteria</taxon>
        <taxon>Rhodobacterales</taxon>
        <taxon>Paracoccaceae</taxon>
        <taxon>Paracoccus</taxon>
    </lineage>
</organism>